<reference key="1">
    <citation type="journal article" date="1986" name="Gene">
        <title>Organization and expression of the transforming region from the European elk papillomavirus (EEPV).</title>
        <authorList>
            <person name="Ahola H."/>
            <person name="Bergman P."/>
            <person name="Stroem A.C."/>
            <person name="Moreno-Lopez J."/>
            <person name="Petterson U."/>
        </authorList>
    </citation>
    <scope>NUCLEOTIDE SEQUENCE [GENOMIC DNA]</scope>
</reference>
<dbReference type="EMBL" id="M15953">
    <property type="protein sequence ID" value="AAA66850.1"/>
    <property type="molecule type" value="Genomic_DNA"/>
</dbReference>
<dbReference type="PIR" id="B29499">
    <property type="entry name" value="W7WLEP"/>
</dbReference>
<dbReference type="RefSeq" id="NP_041302.1">
    <property type="nucleotide sequence ID" value="NC_001524.1"/>
</dbReference>
<dbReference type="SMR" id="P11332"/>
<dbReference type="GeneID" id="1488988"/>
<dbReference type="KEGG" id="vg:1488988"/>
<dbReference type="Proteomes" id="UP000009060">
    <property type="component" value="Genome"/>
</dbReference>
<dbReference type="GO" id="GO:0030430">
    <property type="term" value="C:host cell cytoplasm"/>
    <property type="evidence" value="ECO:0007669"/>
    <property type="project" value="UniProtKB-SubCell"/>
</dbReference>
<dbReference type="GO" id="GO:0042025">
    <property type="term" value="C:host cell nucleus"/>
    <property type="evidence" value="ECO:0007669"/>
    <property type="project" value="UniProtKB-SubCell"/>
</dbReference>
<dbReference type="GO" id="GO:0003677">
    <property type="term" value="F:DNA binding"/>
    <property type="evidence" value="ECO:0007669"/>
    <property type="project" value="UniProtKB-UniRule"/>
</dbReference>
<dbReference type="GO" id="GO:0003700">
    <property type="term" value="F:DNA-binding transcription factor activity"/>
    <property type="evidence" value="ECO:0007669"/>
    <property type="project" value="UniProtKB-UniRule"/>
</dbReference>
<dbReference type="GO" id="GO:0019904">
    <property type="term" value="F:protein domain specific binding"/>
    <property type="evidence" value="ECO:0007669"/>
    <property type="project" value="UniProtKB-UniRule"/>
</dbReference>
<dbReference type="GO" id="GO:0008270">
    <property type="term" value="F:zinc ion binding"/>
    <property type="evidence" value="ECO:0007669"/>
    <property type="project" value="UniProtKB-KW"/>
</dbReference>
<dbReference type="GO" id="GO:0006351">
    <property type="term" value="P:DNA-templated transcription"/>
    <property type="evidence" value="ECO:0007669"/>
    <property type="project" value="UniProtKB-UniRule"/>
</dbReference>
<dbReference type="GO" id="GO:0039645">
    <property type="term" value="P:symbiont-mediated perturbation of host cell cycle G1/S transition checkpoint"/>
    <property type="evidence" value="ECO:0007669"/>
    <property type="project" value="UniProtKB-UniRule"/>
</dbReference>
<dbReference type="GO" id="GO:0052170">
    <property type="term" value="P:symbiont-mediated suppression of host innate immune response"/>
    <property type="evidence" value="ECO:0007669"/>
    <property type="project" value="UniProtKB-KW"/>
</dbReference>
<dbReference type="GO" id="GO:0039502">
    <property type="term" value="P:symbiont-mediated suppression of host type I interferon-mediated signaling pathway"/>
    <property type="evidence" value="ECO:0007669"/>
    <property type="project" value="UniProtKB-UniRule"/>
</dbReference>
<dbReference type="Gene3D" id="3.30.160.330">
    <property type="match status" value="1"/>
</dbReference>
<dbReference type="HAMAP" id="MF_04004">
    <property type="entry name" value="PPV_E7"/>
    <property type="match status" value="1"/>
</dbReference>
<dbReference type="InterPro" id="IPR000148">
    <property type="entry name" value="Papilloma_E7"/>
</dbReference>
<dbReference type="Pfam" id="PF00527">
    <property type="entry name" value="E7"/>
    <property type="match status" value="1"/>
</dbReference>
<dbReference type="SUPFAM" id="SSF161234">
    <property type="entry name" value="E7 C-terminal domain-like"/>
    <property type="match status" value="1"/>
</dbReference>
<organism>
    <name type="scientific">European elk papillomavirus</name>
    <name type="common">EEPV</name>
    <dbReference type="NCBI Taxonomy" id="2885846"/>
    <lineage>
        <taxon>Viruses</taxon>
        <taxon>Monodnaviria</taxon>
        <taxon>Shotokuvirae</taxon>
        <taxon>Cossaviricota</taxon>
        <taxon>Papovaviricetes</taxon>
        <taxon>Zurhausenvirales</taxon>
        <taxon>Papillomaviridae</taxon>
        <taxon>Firstpapillomavirinae</taxon>
        <taxon>Deltapapillomavirus</taxon>
        <taxon>Deltapapillomavirus 1</taxon>
    </lineage>
</organism>
<organismHost>
    <name type="scientific">Cervus elaphus</name>
    <name type="common">Red deer</name>
    <dbReference type="NCBI Taxonomy" id="9860"/>
</organismHost>
<organismHost>
    <name type="scientific">Rangifer tarandus</name>
    <name type="common">Reindeer</name>
    <name type="synonym">Cervus tarandus</name>
    <dbReference type="NCBI Taxonomy" id="9870"/>
</organismHost>
<feature type="chain" id="PRO_0000133469" description="Protein E7">
    <location>
        <begin position="1"/>
        <end position="102"/>
    </location>
</feature>
<feature type="zinc finger region" evidence="1">
    <location>
        <begin position="61"/>
        <end position="97"/>
    </location>
</feature>
<feature type="region of interest" description="E7 terminal domain" evidence="1">
    <location>
        <begin position="2"/>
        <end position="36"/>
    </location>
</feature>
<feature type="region of interest" description="Disordered" evidence="2">
    <location>
        <begin position="30"/>
        <end position="52"/>
    </location>
</feature>
<feature type="short sequence motif" description="Nuclear export signal" evidence="1">
    <location>
        <begin position="79"/>
        <end position="87"/>
    </location>
</feature>
<comment type="function">
    <text evidence="1">Plays a role in viral genome replication by driving entry of quiescent cells into the cell cycle. Stimulation of progression from G1 to S phase allows the virus to efficiently use the cellular DNA replicating machinery to achieve viral genome replication. E7 protein has both transforming and trans-activating activities. Induces the disassembly of the E2F1 transcription factor from RB1, with subsequent transcriptional activation of E2F1-regulated S-phase genes. Interferes with host histone deacetylation mediated by HDAC1 and HDAC2, leading to transcription activation. Also plays a role in the inhibition of both antiviral and antiproliferative functions of host interferon alpha. Interaction with host TMEM173/STING impairs the ability of TMEM173/STING to sense cytosolic DNA and promote the production of type I interferon (IFN-alpha and IFN-beta).</text>
</comment>
<comment type="subunit">
    <text evidence="1">Homodimer. Homooligomer. Interacts with host RB1; this interaction induces dissociation of RB1-E2F1 complex thereby disrupting RB1 activity. Interacts with host EP300; this interaction represses EP300 transcriptional activity. Interacts with protein E2; this interaction inhibits E7 oncogenic activity. Interacts with host TMEM173/STING; this interaction impairs the ability of TMEM173/STING to sense cytosolic DNA and promote the production of type I interferon (IFN-alpha and IFN-beta).</text>
</comment>
<comment type="subcellular location">
    <subcellularLocation>
        <location evidence="1">Host cytoplasm</location>
    </subcellularLocation>
    <subcellularLocation>
        <location evidence="1">Host nucleus</location>
    </subcellularLocation>
    <text evidence="1">Predominantly found in the host nucleus.</text>
</comment>
<comment type="domain">
    <text evidence="1">The E7 terminal domain is an intrinsically disordered domain, whose flexibility and conformational transitions confer target adaptability to the oncoprotein. It allows adaptation to a variety of protein targets and exposes the PEST degradation sequence that regulates its turnover in the cell.</text>
</comment>
<comment type="PTM">
    <text evidence="1">Highly phosphorylated.</text>
</comment>
<comment type="similarity">
    <text evidence="1">Belongs to the papillomaviridae E7 protein family.</text>
</comment>
<gene>
    <name evidence="1" type="primary">E7</name>
</gene>
<keyword id="KW-0010">Activator</keyword>
<keyword id="KW-0238">DNA-binding</keyword>
<keyword id="KW-0244">Early protein</keyword>
<keyword id="KW-1078">G1/S host cell cycle checkpoint dysregulation by virus</keyword>
<keyword id="KW-1035">Host cytoplasm</keyword>
<keyword id="KW-1048">Host nucleus</keyword>
<keyword id="KW-0945">Host-virus interaction</keyword>
<keyword id="KW-1090">Inhibition of host innate immune response by virus</keyword>
<keyword id="KW-1114">Inhibition of host interferon signaling pathway by virus</keyword>
<keyword id="KW-0922">Interferon antiviral system evasion</keyword>
<keyword id="KW-0479">Metal-binding</keyword>
<keyword id="KW-1121">Modulation of host cell cycle by virus</keyword>
<keyword id="KW-0553">Oncogene</keyword>
<keyword id="KW-1185">Reference proteome</keyword>
<keyword id="KW-0804">Transcription</keyword>
<keyword id="KW-0805">Transcription regulation</keyword>
<keyword id="KW-0899">Viral immunoevasion</keyword>
<keyword id="KW-0862">Zinc</keyword>
<keyword id="KW-0863">Zinc-finger</keyword>
<protein>
    <recommendedName>
        <fullName evidence="1">Protein E7</fullName>
    </recommendedName>
</protein>
<sequence length="102" mass="11228">MVHGPRTKKHLPPYESPPLTLLLEPVAPVQQTGIQAPQRKPPSQKGHKKGHKKVYSVTVPCNGCDKNLEFCARTSSATILTLQNLLLKDLDFLCSTCETNHG</sequence>
<evidence type="ECO:0000255" key="1">
    <source>
        <dbReference type="HAMAP-Rule" id="MF_04004"/>
    </source>
</evidence>
<evidence type="ECO:0000256" key="2">
    <source>
        <dbReference type="SAM" id="MobiDB-lite"/>
    </source>
</evidence>
<accession>P11332</accession>
<name>VE7_PAPVE</name>
<proteinExistence type="inferred from homology"/>